<sequence>MSTEISTRGRQRAIGHEEYSLYSSLSEEELVQMAIEQSLADKTRGPTPAETSVSSQTNHQPGHIHPWTRSSSPPESPPARAPLGLFQGVMQKYSSNLFKTSQMAAMDPVLKAIKEGDEEALKAMIQDGKNLAEPNKEGWLPLHEAAYYGKLGCLKVLQRAYPGTIDQRTLQEETALYLATCREHLDCLLSLLQAGAEPDISNKSRETPLYKACERKNAEAVRILVQYNADANHRCNRGWTALHESVSRNDLEVMEILVSGGAKVEAKNVYSITPLFVAAQSGQLEALRFLAKHGADINTQASDSASALYEACKNEHEDVVEFLLSQGADANKANKDGLLPLHVASKKGNYRIVQMLLPVTSRTRVRRSGISPLHLAAERNHDAVLEALLAARFDVNTPLAPERARLYEDRRTSALYFAVVNNNVYATELLLLAGADPNRDVISPLLVAIRHGCLRTMQLLLDHGANIDAYIATHPTAFPATIMFAMKCLSLLKFLMDLGCDGEPCFSCLYGNGPHPPAPRSGRFNDAPVDDKAPSVVQFCEFLSAPEVSRWAGPIIDVLLDYVGNVQLCSRLKEHIDSFEDWAVIKEKAEPPRPLAHLCRLRVRKAIGKYRIKLLDTLPLPGRLIRYLKYENTQ</sequence>
<protein>
    <recommendedName>
        <fullName>Ankyrin repeat and SOCS box protein 2</fullName>
        <shortName>ASB-2</shortName>
    </recommendedName>
</protein>
<dbReference type="EMBL" id="BC085882">
    <property type="protein sequence ID" value="AAH85882.1"/>
    <property type="molecule type" value="mRNA"/>
</dbReference>
<dbReference type="RefSeq" id="NP_001011984.1">
    <property type="nucleotide sequence ID" value="NM_001011984.1"/>
</dbReference>
<dbReference type="SMR" id="Q5U2S6"/>
<dbReference type="CORUM" id="Q5U2S6"/>
<dbReference type="FunCoup" id="Q5U2S6">
    <property type="interactions" value="69"/>
</dbReference>
<dbReference type="STRING" id="10116.ENSRNOP00000071182"/>
<dbReference type="GlyGen" id="Q5U2S6">
    <property type="glycosylation" value="1 site"/>
</dbReference>
<dbReference type="PhosphoSitePlus" id="Q5U2S6"/>
<dbReference type="PaxDb" id="10116-ENSRNOP00000012045"/>
<dbReference type="Ensembl" id="ENSRNOT00000085517.2">
    <property type="protein sequence ID" value="ENSRNOP00000071182.1"/>
    <property type="gene ID" value="ENSRNOG00000051619.2"/>
</dbReference>
<dbReference type="GeneID" id="299266"/>
<dbReference type="KEGG" id="rno:299266"/>
<dbReference type="UCSC" id="RGD:1306414">
    <property type="organism name" value="rat"/>
</dbReference>
<dbReference type="AGR" id="RGD:1306414"/>
<dbReference type="CTD" id="51676"/>
<dbReference type="RGD" id="1306414">
    <property type="gene designation" value="Asb2"/>
</dbReference>
<dbReference type="eggNOG" id="KOG0504">
    <property type="taxonomic scope" value="Eukaryota"/>
</dbReference>
<dbReference type="GeneTree" id="ENSGT00940000155490"/>
<dbReference type="HOGENOM" id="CLU_023739_2_0_1"/>
<dbReference type="InParanoid" id="Q5U2S6"/>
<dbReference type="OMA" id="WTCIKEK"/>
<dbReference type="OrthoDB" id="47891at9989"/>
<dbReference type="PhylomeDB" id="Q5U2S6"/>
<dbReference type="TreeFam" id="TF315127"/>
<dbReference type="UniPathway" id="UPA00143"/>
<dbReference type="PRO" id="PR:Q5U2S6"/>
<dbReference type="Proteomes" id="UP000002494">
    <property type="component" value="Chromosome 6"/>
</dbReference>
<dbReference type="Bgee" id="ENSRNOG00000051619">
    <property type="expression patterns" value="Expressed in skeletal muscle tissue and 19 other cell types or tissues"/>
</dbReference>
<dbReference type="GO" id="GO:0001725">
    <property type="term" value="C:stress fiber"/>
    <property type="evidence" value="ECO:0007669"/>
    <property type="project" value="UniProtKB-SubCell"/>
</dbReference>
<dbReference type="GO" id="GO:0000151">
    <property type="term" value="C:ubiquitin ligase complex"/>
    <property type="evidence" value="ECO:0000266"/>
    <property type="project" value="RGD"/>
</dbReference>
<dbReference type="GO" id="GO:0030018">
    <property type="term" value="C:Z disc"/>
    <property type="evidence" value="ECO:0007669"/>
    <property type="project" value="UniProtKB-SubCell"/>
</dbReference>
<dbReference type="GO" id="GO:0097602">
    <property type="term" value="F:cullin family protein binding"/>
    <property type="evidence" value="ECO:0000266"/>
    <property type="project" value="RGD"/>
</dbReference>
<dbReference type="GO" id="GO:0030036">
    <property type="term" value="P:actin cytoskeleton organization"/>
    <property type="evidence" value="ECO:0000250"/>
    <property type="project" value="UniProtKB"/>
</dbReference>
<dbReference type="GO" id="GO:0055013">
    <property type="term" value="P:cardiac muscle cell development"/>
    <property type="evidence" value="ECO:0000250"/>
    <property type="project" value="UniProtKB"/>
</dbReference>
<dbReference type="GO" id="GO:0055007">
    <property type="term" value="P:cardiac muscle cell differentiation"/>
    <property type="evidence" value="ECO:0000250"/>
    <property type="project" value="UniProtKB"/>
</dbReference>
<dbReference type="GO" id="GO:0007507">
    <property type="term" value="P:heart development"/>
    <property type="evidence" value="ECO:0000318"/>
    <property type="project" value="GO_Central"/>
</dbReference>
<dbReference type="GO" id="GO:0001947">
    <property type="term" value="P:heart looping"/>
    <property type="evidence" value="ECO:0000266"/>
    <property type="project" value="RGD"/>
</dbReference>
<dbReference type="GO" id="GO:0035556">
    <property type="term" value="P:intracellular signal transduction"/>
    <property type="evidence" value="ECO:0007669"/>
    <property type="project" value="InterPro"/>
</dbReference>
<dbReference type="GO" id="GO:0043161">
    <property type="term" value="P:proteasome-mediated ubiquitin-dependent protein catabolic process"/>
    <property type="evidence" value="ECO:0000250"/>
    <property type="project" value="UniProtKB"/>
</dbReference>
<dbReference type="GO" id="GO:0016567">
    <property type="term" value="P:protein ubiquitination"/>
    <property type="evidence" value="ECO:0000266"/>
    <property type="project" value="RGD"/>
</dbReference>
<dbReference type="GO" id="GO:0014732">
    <property type="term" value="P:skeletal muscle atrophy"/>
    <property type="evidence" value="ECO:0000250"/>
    <property type="project" value="UniProtKB"/>
</dbReference>
<dbReference type="GO" id="GO:0035914">
    <property type="term" value="P:skeletal muscle cell differentiation"/>
    <property type="evidence" value="ECO:0000266"/>
    <property type="project" value="RGD"/>
</dbReference>
<dbReference type="CDD" id="cd03721">
    <property type="entry name" value="SOCS_ASB2"/>
    <property type="match status" value="1"/>
</dbReference>
<dbReference type="FunFam" id="1.10.750.20:FF:000001">
    <property type="entry name" value="Ankyrin repeat and SOCS box containing 1"/>
    <property type="match status" value="1"/>
</dbReference>
<dbReference type="FunFam" id="1.25.40.20:FF:000246">
    <property type="entry name" value="Ankyrin repeat and SOCS box containing 2"/>
    <property type="match status" value="1"/>
</dbReference>
<dbReference type="FunFam" id="1.25.40.20:FF:000254">
    <property type="entry name" value="Ankyrin repeat and SOCS box containing 2"/>
    <property type="match status" value="1"/>
</dbReference>
<dbReference type="FunFam" id="1.25.40.20:FF:000905">
    <property type="entry name" value="Ankyrin repeat and SOCS box protein 2"/>
    <property type="match status" value="1"/>
</dbReference>
<dbReference type="Gene3D" id="1.25.40.20">
    <property type="entry name" value="Ankyrin repeat-containing domain"/>
    <property type="match status" value="3"/>
</dbReference>
<dbReference type="Gene3D" id="1.10.750.20">
    <property type="entry name" value="SOCS box"/>
    <property type="match status" value="1"/>
</dbReference>
<dbReference type="InterPro" id="IPR002110">
    <property type="entry name" value="Ankyrin_rpt"/>
</dbReference>
<dbReference type="InterPro" id="IPR036770">
    <property type="entry name" value="Ankyrin_rpt-contain_sf"/>
</dbReference>
<dbReference type="InterPro" id="IPR037330">
    <property type="entry name" value="ASB2_SOCS"/>
</dbReference>
<dbReference type="InterPro" id="IPR001496">
    <property type="entry name" value="SOCS_box"/>
</dbReference>
<dbReference type="InterPro" id="IPR036036">
    <property type="entry name" value="SOCS_box-like_dom_sf"/>
</dbReference>
<dbReference type="PANTHER" id="PTHR24126:SF14">
    <property type="entry name" value="ANK_REP_REGION DOMAIN-CONTAINING PROTEIN"/>
    <property type="match status" value="1"/>
</dbReference>
<dbReference type="PANTHER" id="PTHR24126">
    <property type="entry name" value="ANKYRIN REPEAT, PH AND SEC7 DOMAIN CONTAINING PROTEIN SECG-RELATED"/>
    <property type="match status" value="1"/>
</dbReference>
<dbReference type="Pfam" id="PF12796">
    <property type="entry name" value="Ank_2"/>
    <property type="match status" value="3"/>
</dbReference>
<dbReference type="Pfam" id="PF13606">
    <property type="entry name" value="Ank_3"/>
    <property type="match status" value="1"/>
</dbReference>
<dbReference type="Pfam" id="PF13637">
    <property type="entry name" value="Ank_4"/>
    <property type="match status" value="1"/>
</dbReference>
<dbReference type="Pfam" id="PF07525">
    <property type="entry name" value="SOCS_box"/>
    <property type="match status" value="1"/>
</dbReference>
<dbReference type="PRINTS" id="PR01415">
    <property type="entry name" value="ANKYRIN"/>
</dbReference>
<dbReference type="SMART" id="SM00248">
    <property type="entry name" value="ANK"/>
    <property type="match status" value="11"/>
</dbReference>
<dbReference type="SMART" id="SM00253">
    <property type="entry name" value="SOCS"/>
    <property type="match status" value="1"/>
</dbReference>
<dbReference type="SMART" id="SM00969">
    <property type="entry name" value="SOCS_box"/>
    <property type="match status" value="1"/>
</dbReference>
<dbReference type="SUPFAM" id="SSF48403">
    <property type="entry name" value="Ankyrin repeat"/>
    <property type="match status" value="2"/>
</dbReference>
<dbReference type="SUPFAM" id="SSF158235">
    <property type="entry name" value="SOCS box-like"/>
    <property type="match status" value="1"/>
</dbReference>
<dbReference type="PROSITE" id="PS50297">
    <property type="entry name" value="ANK_REP_REGION"/>
    <property type="match status" value="1"/>
</dbReference>
<dbReference type="PROSITE" id="PS50088">
    <property type="entry name" value="ANK_REPEAT"/>
    <property type="match status" value="8"/>
</dbReference>
<dbReference type="PROSITE" id="PS50225">
    <property type="entry name" value="SOCS"/>
    <property type="match status" value="1"/>
</dbReference>
<name>ASB2_RAT</name>
<proteinExistence type="evidence at transcript level"/>
<gene>
    <name evidence="8" type="primary">Asb2</name>
</gene>
<reference key="1">
    <citation type="journal article" date="2004" name="Genome Res.">
        <title>The status, quality, and expansion of the NIH full-length cDNA project: the Mammalian Gene Collection (MGC).</title>
        <authorList>
            <consortium name="The MGC Project Team"/>
        </authorList>
    </citation>
    <scope>NUCLEOTIDE SEQUENCE [LARGE SCALE MRNA]</scope>
    <source>
        <strain>Brown Norway</strain>
        <tissue>Heart</tissue>
    </source>
</reference>
<accession>Q5U2S6</accession>
<keyword id="KW-0040">ANK repeat</keyword>
<keyword id="KW-0963">Cytoplasm</keyword>
<keyword id="KW-0206">Cytoskeleton</keyword>
<keyword id="KW-0597">Phosphoprotein</keyword>
<keyword id="KW-1185">Reference proteome</keyword>
<keyword id="KW-0677">Repeat</keyword>
<keyword id="KW-0832">Ubl conjugation</keyword>
<keyword id="KW-0833">Ubl conjugation pathway</keyword>
<comment type="function">
    <text evidence="1 2">Substrate-recognition component of a SCF-like ECS (Elongin-Cullin-SOCS-box protein) E3 ubiquitin-protein ligase complex which mediates the ubiquitination and subsequent proteasomal degradation of target proteins (By similarity). Mediates Notch-induced ubiquitination and degradation of substrates including E2A and JAK2 (By similarity). Required during embryonic heart development for complete heart looping (By similarity). Required for cardiomyocyte differentiation (By similarity). Involved in myogenic differentiation and targets filamin FLNB for proteasomal degradation but not filamin FLNA (By similarity). Also targets DES for proteasomal degradation (By similarity). Acts as a negative regulator of skeletal muscle mass (By similarity).</text>
</comment>
<comment type="pathway">
    <text>Protein modification; protein ubiquitination.</text>
</comment>
<comment type="subunit">
    <text evidence="1 2">Component of a probable ECS E3 ubiquitin-protein ligase complex which contains CUL5, either RBX1 or RNF7/RBX2, Elongin BC complex (ELOB and ELOC) and ASB2. Interacts with SKP2. Through its interaction with SKP2, likely to bridge the formation of dimeric E3-ubiquitin-protein ligase complexes composed of an ECS complex and an SCF(SKP2) complex. Interacts with JAK2; the interaction targets JAK2 for Notch-mediated proteasomal degradation. Interacts with TCF3/E2A; the interaction is mediated by SKP2 and targets TCF3 for Notch-mediated proteasomal degradation (By similarity). Interacts with DES (By similarity).</text>
</comment>
<comment type="subcellular location">
    <subcellularLocation>
        <location evidence="2">Cytoplasm</location>
        <location evidence="2">Cytoskeleton</location>
        <location evidence="2">Stress fiber</location>
    </subcellularLocation>
    <subcellularLocation>
        <location evidence="1">Cytoplasm</location>
        <location evidence="1">Myofibril</location>
        <location evidence="1">Sarcomere</location>
        <location evidence="1">Z line</location>
    </subcellularLocation>
    <text evidence="1">Localizes to the Z line in cardiomyocytes.</text>
</comment>
<comment type="domain">
    <text evidence="2">The SOCS box domain mediates the interaction with the Elongin BC complex, an adapter module in different E3 ubiquitin-protein ligase complexes.</text>
</comment>
<comment type="domain">
    <text evidence="2">The UIM domain is required for monoubiquitination.</text>
</comment>
<comment type="PTM">
    <text evidence="2">Monoubiquitinated.</text>
</comment>
<comment type="similarity">
    <text evidence="7">Belongs to the ankyrin SOCS box (ASB) family.</text>
</comment>
<organism>
    <name type="scientific">Rattus norvegicus</name>
    <name type="common">Rat</name>
    <dbReference type="NCBI Taxonomy" id="10116"/>
    <lineage>
        <taxon>Eukaryota</taxon>
        <taxon>Metazoa</taxon>
        <taxon>Chordata</taxon>
        <taxon>Craniata</taxon>
        <taxon>Vertebrata</taxon>
        <taxon>Euteleostomi</taxon>
        <taxon>Mammalia</taxon>
        <taxon>Eutheria</taxon>
        <taxon>Euarchontoglires</taxon>
        <taxon>Glires</taxon>
        <taxon>Rodentia</taxon>
        <taxon>Myomorpha</taxon>
        <taxon>Muroidea</taxon>
        <taxon>Muridae</taxon>
        <taxon>Murinae</taxon>
        <taxon>Rattus</taxon>
    </lineage>
</organism>
<evidence type="ECO:0000250" key="1">
    <source>
        <dbReference type="UniProtKB" id="Q8K0L0"/>
    </source>
</evidence>
<evidence type="ECO:0000250" key="2">
    <source>
        <dbReference type="UniProtKB" id="Q96Q27"/>
    </source>
</evidence>
<evidence type="ECO:0000255" key="3"/>
<evidence type="ECO:0000255" key="4">
    <source>
        <dbReference type="PROSITE-ProRule" id="PRU00194"/>
    </source>
</evidence>
<evidence type="ECO:0000255" key="5">
    <source>
        <dbReference type="PROSITE-ProRule" id="PRU00213"/>
    </source>
</evidence>
<evidence type="ECO:0000256" key="6">
    <source>
        <dbReference type="SAM" id="MobiDB-lite"/>
    </source>
</evidence>
<evidence type="ECO:0000305" key="7"/>
<evidence type="ECO:0000312" key="8">
    <source>
        <dbReference type="EMBL" id="AAH85882.1"/>
    </source>
</evidence>
<feature type="chain" id="PRO_0000233304" description="Ankyrin repeat and SOCS box protein 2">
    <location>
        <begin position="1"/>
        <end position="634"/>
    </location>
</feature>
<feature type="domain" description="UIM" evidence="5">
    <location>
        <begin position="26"/>
        <end position="45"/>
    </location>
</feature>
<feature type="repeat" description="ANK 1" evidence="3">
    <location>
        <begin position="104"/>
        <end position="133"/>
    </location>
</feature>
<feature type="repeat" description="ANK 2" evidence="3">
    <location>
        <begin position="137"/>
        <end position="167"/>
    </location>
</feature>
<feature type="repeat" description="ANK 3" evidence="3">
    <location>
        <begin position="171"/>
        <end position="200"/>
    </location>
</feature>
<feature type="repeat" description="ANK 4" evidence="3">
    <location>
        <begin position="204"/>
        <end position="233"/>
    </location>
</feature>
<feature type="repeat" description="ANK 5" evidence="3">
    <location>
        <begin position="237"/>
        <end position="266"/>
    </location>
</feature>
<feature type="repeat" description="ANK 6" evidence="3">
    <location>
        <begin position="270"/>
        <end position="299"/>
    </location>
</feature>
<feature type="repeat" description="ANK 7" evidence="3">
    <location>
        <begin position="303"/>
        <end position="332"/>
    </location>
</feature>
<feature type="repeat" description="ANK 8" evidence="3">
    <location>
        <begin position="336"/>
        <end position="365"/>
    </location>
</feature>
<feature type="repeat" description="ANK 9" evidence="3">
    <location>
        <begin position="368"/>
        <end position="397"/>
    </location>
</feature>
<feature type="repeat" description="ANK 10" evidence="3">
    <location>
        <begin position="410"/>
        <end position="439"/>
    </location>
</feature>
<feature type="repeat" description="ANK 11" evidence="3">
    <location>
        <begin position="440"/>
        <end position="469"/>
    </location>
</feature>
<feature type="repeat" description="ANK 12" evidence="3">
    <location>
        <begin position="476"/>
        <end position="504"/>
    </location>
</feature>
<feature type="domain" description="SOCS box" evidence="4">
    <location>
        <begin position="580"/>
        <end position="634"/>
    </location>
</feature>
<feature type="region of interest" description="Disordered" evidence="6">
    <location>
        <begin position="35"/>
        <end position="81"/>
    </location>
</feature>
<feature type="compositionally biased region" description="Polar residues" evidence="6">
    <location>
        <begin position="49"/>
        <end position="60"/>
    </location>
</feature>
<feature type="modified residue" description="Phosphoserine" evidence="2">
    <location>
        <position position="371"/>
    </location>
</feature>